<feature type="chain" id="PRO_1000205206" description="Oxygen-dependent coproporphyrinogen-III oxidase">
    <location>
        <begin position="1"/>
        <end position="279"/>
    </location>
</feature>
<feature type="region of interest" description="Important for dimerization" evidence="1">
    <location>
        <begin position="244"/>
        <end position="279"/>
    </location>
</feature>
<feature type="active site" description="Proton donor" evidence="1">
    <location>
        <position position="116"/>
    </location>
</feature>
<feature type="binding site" evidence="1">
    <location>
        <position position="102"/>
    </location>
    <ligand>
        <name>substrate</name>
    </ligand>
</feature>
<feature type="binding site" evidence="1">
    <location>
        <position position="106"/>
    </location>
    <ligand>
        <name>a divalent metal cation</name>
        <dbReference type="ChEBI" id="CHEBI:60240"/>
    </ligand>
</feature>
<feature type="binding site" evidence="1">
    <location>
        <position position="116"/>
    </location>
    <ligand>
        <name>a divalent metal cation</name>
        <dbReference type="ChEBI" id="CHEBI:60240"/>
    </ligand>
</feature>
<feature type="binding site" evidence="1">
    <location>
        <begin position="118"/>
        <end position="120"/>
    </location>
    <ligand>
        <name>substrate</name>
    </ligand>
</feature>
<feature type="binding site" evidence="1">
    <location>
        <position position="149"/>
    </location>
    <ligand>
        <name>a divalent metal cation</name>
        <dbReference type="ChEBI" id="CHEBI:60240"/>
    </ligand>
</feature>
<feature type="binding site" evidence="1">
    <location>
        <position position="179"/>
    </location>
    <ligand>
        <name>a divalent metal cation</name>
        <dbReference type="ChEBI" id="CHEBI:60240"/>
    </ligand>
</feature>
<feature type="site" description="Important for dimerization" evidence="1">
    <location>
        <position position="179"/>
    </location>
</feature>
<organism>
    <name type="scientific">Rickettsia peacockii (strain Rustic)</name>
    <dbReference type="NCBI Taxonomy" id="562019"/>
    <lineage>
        <taxon>Bacteria</taxon>
        <taxon>Pseudomonadati</taxon>
        <taxon>Pseudomonadota</taxon>
        <taxon>Alphaproteobacteria</taxon>
        <taxon>Rickettsiales</taxon>
        <taxon>Rickettsiaceae</taxon>
        <taxon>Rickettsieae</taxon>
        <taxon>Rickettsia</taxon>
        <taxon>spotted fever group</taxon>
    </lineage>
</organism>
<gene>
    <name evidence="1" type="primary">hemF</name>
    <name type="ordered locus">RPR_07740</name>
</gene>
<evidence type="ECO:0000255" key="1">
    <source>
        <dbReference type="HAMAP-Rule" id="MF_00333"/>
    </source>
</evidence>
<protein>
    <recommendedName>
        <fullName evidence="1">Oxygen-dependent coproporphyrinogen-III oxidase</fullName>
        <shortName evidence="1">CPO</shortName>
        <shortName evidence="1">Coprogen oxidase</shortName>
        <shortName evidence="1">Coproporphyrinogenase</shortName>
        <ecNumber evidence="1">1.3.3.3</ecNumber>
    </recommendedName>
</protein>
<comment type="function">
    <text evidence="1">Involved in the heme biosynthesis. Catalyzes the aerobic oxidative decarboxylation of propionate groups of rings A and B of coproporphyrinogen-III to yield the vinyl groups in protoporphyrinogen-IX.</text>
</comment>
<comment type="catalytic activity">
    <reaction evidence="1">
        <text>coproporphyrinogen III + O2 + 2 H(+) = protoporphyrinogen IX + 2 CO2 + 2 H2O</text>
        <dbReference type="Rhea" id="RHEA:18257"/>
        <dbReference type="ChEBI" id="CHEBI:15377"/>
        <dbReference type="ChEBI" id="CHEBI:15378"/>
        <dbReference type="ChEBI" id="CHEBI:15379"/>
        <dbReference type="ChEBI" id="CHEBI:16526"/>
        <dbReference type="ChEBI" id="CHEBI:57307"/>
        <dbReference type="ChEBI" id="CHEBI:57309"/>
        <dbReference type="EC" id="1.3.3.3"/>
    </reaction>
</comment>
<comment type="cofactor">
    <cofactor evidence="1">
        <name>a divalent metal cation</name>
        <dbReference type="ChEBI" id="CHEBI:60240"/>
    </cofactor>
</comment>
<comment type="pathway">
    <text evidence="1">Porphyrin-containing compound metabolism; protoporphyrin-IX biosynthesis; protoporphyrinogen-IX from coproporphyrinogen-III (O2 route): step 1/1.</text>
</comment>
<comment type="subunit">
    <text evidence="1">Homodimer.</text>
</comment>
<comment type="subcellular location">
    <subcellularLocation>
        <location evidence="1">Cytoplasm</location>
    </subcellularLocation>
</comment>
<comment type="similarity">
    <text evidence="1">Belongs to the aerobic coproporphyrinogen-III oxidase family.</text>
</comment>
<reference key="1">
    <citation type="journal article" date="2009" name="PLoS ONE">
        <title>Genome sequence of the endosymbiont Rickettsia peacockii and comparison with virulent Rickettsia rickettsii: identification of virulence factors.</title>
        <authorList>
            <person name="Felsheim R.F."/>
            <person name="Kurtti T.J."/>
            <person name="Munderloh U.G."/>
        </authorList>
    </citation>
    <scope>NUCLEOTIDE SEQUENCE [LARGE SCALE GENOMIC DNA]</scope>
    <source>
        <strain>Rustic</strain>
    </source>
</reference>
<dbReference type="EC" id="1.3.3.3" evidence="1"/>
<dbReference type="EMBL" id="CP001227">
    <property type="protein sequence ID" value="ACR47933.1"/>
    <property type="molecule type" value="Genomic_DNA"/>
</dbReference>
<dbReference type="RefSeq" id="WP_012737078.1">
    <property type="nucleotide sequence ID" value="NC_012730.1"/>
</dbReference>
<dbReference type="SMR" id="C4K2Y8"/>
<dbReference type="KEGG" id="rpk:RPR_07740"/>
<dbReference type="HOGENOM" id="CLU_026169_0_1_5"/>
<dbReference type="UniPathway" id="UPA00251">
    <property type="reaction ID" value="UER00322"/>
</dbReference>
<dbReference type="Proteomes" id="UP000005015">
    <property type="component" value="Chromosome"/>
</dbReference>
<dbReference type="GO" id="GO:0005737">
    <property type="term" value="C:cytoplasm"/>
    <property type="evidence" value="ECO:0007669"/>
    <property type="project" value="UniProtKB-SubCell"/>
</dbReference>
<dbReference type="GO" id="GO:0004109">
    <property type="term" value="F:coproporphyrinogen oxidase activity"/>
    <property type="evidence" value="ECO:0007669"/>
    <property type="project" value="UniProtKB-UniRule"/>
</dbReference>
<dbReference type="GO" id="GO:0046872">
    <property type="term" value="F:metal ion binding"/>
    <property type="evidence" value="ECO:0007669"/>
    <property type="project" value="UniProtKB-KW"/>
</dbReference>
<dbReference type="GO" id="GO:0042803">
    <property type="term" value="F:protein homodimerization activity"/>
    <property type="evidence" value="ECO:0000250"/>
    <property type="project" value="UniProtKB"/>
</dbReference>
<dbReference type="GO" id="GO:0006782">
    <property type="term" value="P:protoporphyrinogen IX biosynthetic process"/>
    <property type="evidence" value="ECO:0007669"/>
    <property type="project" value="UniProtKB-UniRule"/>
</dbReference>
<dbReference type="FunFam" id="3.40.1500.10:FF:000005">
    <property type="entry name" value="Oxygen-dependent coproporphyrinogen-III oxidase"/>
    <property type="match status" value="1"/>
</dbReference>
<dbReference type="Gene3D" id="3.40.1500.10">
    <property type="entry name" value="Coproporphyrinogen III oxidase, aerobic"/>
    <property type="match status" value="1"/>
</dbReference>
<dbReference type="HAMAP" id="MF_00333">
    <property type="entry name" value="Coprogen_oxidas"/>
    <property type="match status" value="1"/>
</dbReference>
<dbReference type="InterPro" id="IPR001260">
    <property type="entry name" value="Coprogen_oxidase_aer"/>
</dbReference>
<dbReference type="InterPro" id="IPR036406">
    <property type="entry name" value="Coprogen_oxidase_aer_sf"/>
</dbReference>
<dbReference type="InterPro" id="IPR018375">
    <property type="entry name" value="Coprogen_oxidase_CS"/>
</dbReference>
<dbReference type="NCBIfam" id="NF003727">
    <property type="entry name" value="PRK05330.1"/>
    <property type="match status" value="1"/>
</dbReference>
<dbReference type="PANTHER" id="PTHR10755">
    <property type="entry name" value="COPROPORPHYRINOGEN III OXIDASE, MITOCHONDRIAL"/>
    <property type="match status" value="1"/>
</dbReference>
<dbReference type="PANTHER" id="PTHR10755:SF0">
    <property type="entry name" value="OXYGEN-DEPENDENT COPROPORPHYRINOGEN-III OXIDASE, MITOCHONDRIAL"/>
    <property type="match status" value="1"/>
</dbReference>
<dbReference type="Pfam" id="PF01218">
    <property type="entry name" value="Coprogen_oxidas"/>
    <property type="match status" value="1"/>
</dbReference>
<dbReference type="PIRSF" id="PIRSF000166">
    <property type="entry name" value="Coproporphyri_ox"/>
    <property type="match status" value="1"/>
</dbReference>
<dbReference type="PRINTS" id="PR00073">
    <property type="entry name" value="COPRGNOXDASE"/>
</dbReference>
<dbReference type="SUPFAM" id="SSF102886">
    <property type="entry name" value="Coproporphyrinogen III oxidase"/>
    <property type="match status" value="1"/>
</dbReference>
<dbReference type="PROSITE" id="PS01021">
    <property type="entry name" value="COPROGEN_OXIDASE"/>
    <property type="match status" value="1"/>
</dbReference>
<sequence>MNIENKEITSSWFTNLRDLLCKEFEKIEEEYAQTKGLKPAKFVRSSWQRNGGGGGVMSLMKGAVFEKVGVNISTVFGKISPEFRNEIPGVELDGKFFATGISLVAHLKSPLIPAMHFNTRYIETSKSWFGGGGDLTPFYPEKNETVKFHAAFKEACDKYDSSYYPKFKKQCDEYFYLKHRKEPRGVGGIFYDYLNNGNFEQDFAFTQDVGKALLSVYPEIVRSKLFLPWTAEQKEYQLIRRGRYVEFNLLYDRGTKFGLMTDGNVEAILMSLPPEVKFN</sequence>
<proteinExistence type="inferred from homology"/>
<keyword id="KW-0963">Cytoplasm</keyword>
<keyword id="KW-0350">Heme biosynthesis</keyword>
<keyword id="KW-0479">Metal-binding</keyword>
<keyword id="KW-0560">Oxidoreductase</keyword>
<keyword id="KW-0627">Porphyrin biosynthesis</keyword>
<accession>C4K2Y8</accession>
<name>HEM6_RICPU</name>